<protein>
    <recommendedName>
        <fullName>GDSL esterase/lipase CPRD49</fullName>
        <ecNumber>3.1.1.-</ecNumber>
    </recommendedName>
    <alternativeName>
        <fullName>Extracellular lipase CPRD49</fullName>
    </alternativeName>
</protein>
<gene>
    <name type="primary">CPRD49</name>
    <name type="ordered locus">At3g11210</name>
    <name type="ORF">F11B9.13</name>
    <name type="ORF">F9F8.1</name>
</gene>
<feature type="signal peptide" evidence="2">
    <location>
        <begin position="1"/>
        <end position="27"/>
    </location>
</feature>
<feature type="chain" id="PRO_0000367326" description="GDSL esterase/lipase CPRD49">
    <location>
        <begin position="28"/>
        <end position="256"/>
    </location>
</feature>
<feature type="active site" description="Nucleophile" evidence="1">
    <location>
        <position position="15"/>
    </location>
</feature>
<feature type="active site" evidence="1">
    <location>
        <position position="213"/>
    </location>
</feature>
<feature type="glycosylation site" description="N-linked (GlcNAc...) asparagine" evidence="2">
    <location>
        <position position="49"/>
    </location>
</feature>
<feature type="glycosylation site" description="N-linked (GlcNAc...) asparagine" evidence="2">
    <location>
        <position position="79"/>
    </location>
</feature>
<feature type="glycosylation site" description="N-linked (GlcNAc...) asparagine" evidence="2">
    <location>
        <position position="243"/>
    </location>
</feature>
<feature type="sequence conflict" description="In Ref. 5; AAM63310." evidence="4" ref="5">
    <original>F</original>
    <variation>S</variation>
    <location>
        <position position="115"/>
    </location>
</feature>
<reference key="1">
    <citation type="journal article" date="2000" name="Nature">
        <title>Sequence and analysis of chromosome 3 of the plant Arabidopsis thaliana.</title>
        <authorList>
            <person name="Salanoubat M."/>
            <person name="Lemcke K."/>
            <person name="Rieger M."/>
            <person name="Ansorge W."/>
            <person name="Unseld M."/>
            <person name="Fartmann B."/>
            <person name="Valle G."/>
            <person name="Bloecker H."/>
            <person name="Perez-Alonso M."/>
            <person name="Obermaier B."/>
            <person name="Delseny M."/>
            <person name="Boutry M."/>
            <person name="Grivell L.A."/>
            <person name="Mache R."/>
            <person name="Puigdomenech P."/>
            <person name="De Simone V."/>
            <person name="Choisne N."/>
            <person name="Artiguenave F."/>
            <person name="Robert C."/>
            <person name="Brottier P."/>
            <person name="Wincker P."/>
            <person name="Cattolico L."/>
            <person name="Weissenbach J."/>
            <person name="Saurin W."/>
            <person name="Quetier F."/>
            <person name="Schaefer M."/>
            <person name="Mueller-Auer S."/>
            <person name="Gabel C."/>
            <person name="Fuchs M."/>
            <person name="Benes V."/>
            <person name="Wurmbach E."/>
            <person name="Drzonek H."/>
            <person name="Erfle H."/>
            <person name="Jordan N."/>
            <person name="Bangert S."/>
            <person name="Wiedelmann R."/>
            <person name="Kranz H."/>
            <person name="Voss H."/>
            <person name="Holland R."/>
            <person name="Brandt P."/>
            <person name="Nyakatura G."/>
            <person name="Vezzi A."/>
            <person name="D'Angelo M."/>
            <person name="Pallavicini A."/>
            <person name="Toppo S."/>
            <person name="Simionati B."/>
            <person name="Conrad A."/>
            <person name="Hornischer K."/>
            <person name="Kauer G."/>
            <person name="Loehnert T.-H."/>
            <person name="Nordsiek G."/>
            <person name="Reichelt J."/>
            <person name="Scharfe M."/>
            <person name="Schoen O."/>
            <person name="Bargues M."/>
            <person name="Terol J."/>
            <person name="Climent J."/>
            <person name="Navarro P."/>
            <person name="Collado C."/>
            <person name="Perez-Perez A."/>
            <person name="Ottenwaelder B."/>
            <person name="Duchemin D."/>
            <person name="Cooke R."/>
            <person name="Laudie M."/>
            <person name="Berger-Llauro C."/>
            <person name="Purnelle B."/>
            <person name="Masuy D."/>
            <person name="de Haan M."/>
            <person name="Maarse A.C."/>
            <person name="Alcaraz J.-P."/>
            <person name="Cottet A."/>
            <person name="Casacuberta E."/>
            <person name="Monfort A."/>
            <person name="Argiriou A."/>
            <person name="Flores M."/>
            <person name="Liguori R."/>
            <person name="Vitale D."/>
            <person name="Mannhaupt G."/>
            <person name="Haase D."/>
            <person name="Schoof H."/>
            <person name="Rudd S."/>
            <person name="Zaccaria P."/>
            <person name="Mewes H.-W."/>
            <person name="Mayer K.F.X."/>
            <person name="Kaul S."/>
            <person name="Town C.D."/>
            <person name="Koo H.L."/>
            <person name="Tallon L.J."/>
            <person name="Jenkins J."/>
            <person name="Rooney T."/>
            <person name="Rizzo M."/>
            <person name="Walts A."/>
            <person name="Utterback T."/>
            <person name="Fujii C.Y."/>
            <person name="Shea T.P."/>
            <person name="Creasy T.H."/>
            <person name="Haas B."/>
            <person name="Maiti R."/>
            <person name="Wu D."/>
            <person name="Peterson J."/>
            <person name="Van Aken S."/>
            <person name="Pai G."/>
            <person name="Militscher J."/>
            <person name="Sellers P."/>
            <person name="Gill J.E."/>
            <person name="Feldblyum T.V."/>
            <person name="Preuss D."/>
            <person name="Lin X."/>
            <person name="Nierman W.C."/>
            <person name="Salzberg S.L."/>
            <person name="White O."/>
            <person name="Venter J.C."/>
            <person name="Fraser C.M."/>
            <person name="Kaneko T."/>
            <person name="Nakamura Y."/>
            <person name="Sato S."/>
            <person name="Kato T."/>
            <person name="Asamizu E."/>
            <person name="Sasamoto S."/>
            <person name="Kimura T."/>
            <person name="Idesawa K."/>
            <person name="Kawashima K."/>
            <person name="Kishida Y."/>
            <person name="Kiyokawa C."/>
            <person name="Kohara M."/>
            <person name="Matsumoto M."/>
            <person name="Matsuno A."/>
            <person name="Muraki A."/>
            <person name="Nakayama S."/>
            <person name="Nakazaki N."/>
            <person name="Shinpo S."/>
            <person name="Takeuchi C."/>
            <person name="Wada T."/>
            <person name="Watanabe A."/>
            <person name="Yamada M."/>
            <person name="Yasuda M."/>
            <person name="Tabata S."/>
        </authorList>
    </citation>
    <scope>NUCLEOTIDE SEQUENCE [LARGE SCALE GENOMIC DNA]</scope>
    <source>
        <strain>cv. Columbia</strain>
    </source>
</reference>
<reference key="2">
    <citation type="journal article" date="2017" name="Plant J.">
        <title>Araport11: a complete reannotation of the Arabidopsis thaliana reference genome.</title>
        <authorList>
            <person name="Cheng C.Y."/>
            <person name="Krishnakumar V."/>
            <person name="Chan A.P."/>
            <person name="Thibaud-Nissen F."/>
            <person name="Schobel S."/>
            <person name="Town C.D."/>
        </authorList>
    </citation>
    <scope>GENOME REANNOTATION</scope>
    <source>
        <strain>cv. Columbia</strain>
    </source>
</reference>
<reference key="3">
    <citation type="submission" date="2006-03" db="EMBL/GenBank/DDBJ databases">
        <title>Arabidopsis ORF clones.</title>
        <authorList>
            <person name="Shinn P."/>
            <person name="Chen H."/>
            <person name="Kim C.J."/>
            <person name="Ecker J.R."/>
        </authorList>
    </citation>
    <scope>NUCLEOTIDE SEQUENCE [LARGE SCALE MRNA]</scope>
    <source>
        <strain>cv. Columbia</strain>
    </source>
</reference>
<reference key="4">
    <citation type="submission" date="2006-07" db="EMBL/GenBank/DDBJ databases">
        <title>Large-scale analysis of RIKEN Arabidopsis full-length (RAFL) cDNAs.</title>
        <authorList>
            <person name="Totoki Y."/>
            <person name="Seki M."/>
            <person name="Ishida J."/>
            <person name="Nakajima M."/>
            <person name="Enju A."/>
            <person name="Kamiya A."/>
            <person name="Narusaka M."/>
            <person name="Shin-i T."/>
            <person name="Nakagawa M."/>
            <person name="Sakamoto N."/>
            <person name="Oishi K."/>
            <person name="Kohara Y."/>
            <person name="Kobayashi M."/>
            <person name="Toyoda A."/>
            <person name="Sakaki Y."/>
            <person name="Sakurai T."/>
            <person name="Iida K."/>
            <person name="Akiyama K."/>
            <person name="Satou M."/>
            <person name="Toyoda T."/>
            <person name="Konagaya A."/>
            <person name="Carninci P."/>
            <person name="Kawai J."/>
            <person name="Hayashizaki Y."/>
            <person name="Shinozaki K."/>
        </authorList>
    </citation>
    <scope>NUCLEOTIDE SEQUENCE [LARGE SCALE MRNA]</scope>
    <source>
        <strain>cv. Columbia</strain>
    </source>
</reference>
<reference key="5">
    <citation type="submission" date="2002-03" db="EMBL/GenBank/DDBJ databases">
        <title>Full-length cDNA from Arabidopsis thaliana.</title>
        <authorList>
            <person name="Brover V.V."/>
            <person name="Troukhan M.E."/>
            <person name="Alexandrov N.A."/>
            <person name="Lu Y.-P."/>
            <person name="Flavell R.B."/>
            <person name="Feldmann K.A."/>
        </authorList>
    </citation>
    <scope>NUCLEOTIDE SEQUENCE [LARGE SCALE MRNA]</scope>
</reference>
<reference key="6">
    <citation type="journal article" date="2004" name="Prog. Lipid Res.">
        <title>GDSL family of serine esterases/lipases.</title>
        <authorList>
            <person name="Akoh C.C."/>
            <person name="Lee G.-C."/>
            <person name="Liaw Y.-C."/>
            <person name="Huang T.-H."/>
            <person name="Shaw J.-F."/>
        </authorList>
    </citation>
    <scope>REVIEW</scope>
</reference>
<reference key="7">
    <citation type="journal article" date="2005" name="Plant Cell">
        <title>Gene trap lines define domains of gene regulation in Arabidopsis petals and stamens.</title>
        <authorList>
            <person name="Nakayama N."/>
            <person name="Arroyo J.M."/>
            <person name="Simorowski J."/>
            <person name="May B."/>
            <person name="Martienssen R."/>
            <person name="Irish V.F."/>
        </authorList>
    </citation>
    <scope>TISSUE SPECIFICITY</scope>
</reference>
<reference key="8">
    <citation type="journal article" date="2008" name="Pak. J. Biol. Sci.">
        <title>Sequence analysis of GDSL lipase gene family in Arabidopsis thaliana.</title>
        <authorList>
            <person name="Ling H."/>
        </authorList>
    </citation>
    <scope>GENE FAMILY</scope>
</reference>
<proteinExistence type="evidence at transcript level"/>
<dbReference type="EC" id="3.1.1.-"/>
<dbReference type="EMBL" id="AC009991">
    <property type="protein sequence ID" value="AAF01505.1"/>
    <property type="molecule type" value="Genomic_DNA"/>
</dbReference>
<dbReference type="EMBL" id="AC073395">
    <property type="protein sequence ID" value="AAG50959.1"/>
    <property type="molecule type" value="Genomic_DNA"/>
</dbReference>
<dbReference type="EMBL" id="CP002686">
    <property type="protein sequence ID" value="AEE75014.1"/>
    <property type="molecule type" value="Genomic_DNA"/>
</dbReference>
<dbReference type="EMBL" id="BT024775">
    <property type="protein sequence ID" value="ABD59113.1"/>
    <property type="molecule type" value="mRNA"/>
</dbReference>
<dbReference type="EMBL" id="AK228873">
    <property type="protein sequence ID" value="BAF00764.1"/>
    <property type="molecule type" value="mRNA"/>
</dbReference>
<dbReference type="EMBL" id="AY086102">
    <property type="protein sequence ID" value="AAM63310.1"/>
    <property type="molecule type" value="mRNA"/>
</dbReference>
<dbReference type="RefSeq" id="NP_566387.1">
    <property type="nucleotide sequence ID" value="NM_111956.3"/>
</dbReference>
<dbReference type="SMR" id="Q9SRM5"/>
<dbReference type="FunCoup" id="Q9SRM5">
    <property type="interactions" value="53"/>
</dbReference>
<dbReference type="STRING" id="3702.Q9SRM5"/>
<dbReference type="GlyCosmos" id="Q9SRM5">
    <property type="glycosylation" value="3 sites, No reported glycans"/>
</dbReference>
<dbReference type="GlyGen" id="Q9SRM5">
    <property type="glycosylation" value="3 sites"/>
</dbReference>
<dbReference type="PaxDb" id="3702-AT3G11210.1"/>
<dbReference type="ProteomicsDB" id="224493"/>
<dbReference type="DNASU" id="820291"/>
<dbReference type="EnsemblPlants" id="AT3G11210.1">
    <property type="protein sequence ID" value="AT3G11210.1"/>
    <property type="gene ID" value="AT3G11210"/>
</dbReference>
<dbReference type="GeneID" id="820291"/>
<dbReference type="Gramene" id="AT3G11210.1">
    <property type="protein sequence ID" value="AT3G11210.1"/>
    <property type="gene ID" value="AT3G11210"/>
</dbReference>
<dbReference type="KEGG" id="ath:AT3G11210"/>
<dbReference type="Araport" id="AT3G11210"/>
<dbReference type="TAIR" id="AT3G11210"/>
<dbReference type="eggNOG" id="KOG3035">
    <property type="taxonomic scope" value="Eukaryota"/>
</dbReference>
<dbReference type="HOGENOM" id="CLU_051989_0_2_1"/>
<dbReference type="InParanoid" id="Q9SRM5"/>
<dbReference type="OMA" id="VPIDRYK"/>
<dbReference type="PhylomeDB" id="Q9SRM5"/>
<dbReference type="PRO" id="PR:Q9SRM5"/>
<dbReference type="Proteomes" id="UP000006548">
    <property type="component" value="Chromosome 3"/>
</dbReference>
<dbReference type="ExpressionAtlas" id="Q9SRM5">
    <property type="expression patterns" value="baseline and differential"/>
</dbReference>
<dbReference type="GO" id="GO:0005576">
    <property type="term" value="C:extracellular region"/>
    <property type="evidence" value="ECO:0007669"/>
    <property type="project" value="UniProtKB-SubCell"/>
</dbReference>
<dbReference type="GO" id="GO:0016788">
    <property type="term" value="F:hydrolase activity, acting on ester bonds"/>
    <property type="evidence" value="ECO:0007669"/>
    <property type="project" value="InterPro"/>
</dbReference>
<dbReference type="GO" id="GO:0016042">
    <property type="term" value="P:lipid catabolic process"/>
    <property type="evidence" value="ECO:0007669"/>
    <property type="project" value="UniProtKB-KW"/>
</dbReference>
<dbReference type="CDD" id="cd01838">
    <property type="entry name" value="Isoamyl_acetate_hydrolase_like"/>
    <property type="match status" value="1"/>
</dbReference>
<dbReference type="FunFam" id="3.40.50.1110:FF:000002">
    <property type="entry name" value="isoamyl acetate-hydrolyzing esterase 1 homolog"/>
    <property type="match status" value="1"/>
</dbReference>
<dbReference type="Gene3D" id="3.40.50.1110">
    <property type="entry name" value="SGNH hydrolase"/>
    <property type="match status" value="1"/>
</dbReference>
<dbReference type="InterPro" id="IPR001087">
    <property type="entry name" value="GDSL"/>
</dbReference>
<dbReference type="InterPro" id="IPR045136">
    <property type="entry name" value="Iah1-like"/>
</dbReference>
<dbReference type="InterPro" id="IPR036514">
    <property type="entry name" value="SGNH_hydro_sf"/>
</dbReference>
<dbReference type="PANTHER" id="PTHR14209:SF9">
    <property type="entry name" value="GDSL ESTERASE_LIPASE CPRD49"/>
    <property type="match status" value="1"/>
</dbReference>
<dbReference type="PANTHER" id="PTHR14209">
    <property type="entry name" value="ISOAMYL ACETATE-HYDROLYZING ESTERASE 1"/>
    <property type="match status" value="1"/>
</dbReference>
<dbReference type="Pfam" id="PF00657">
    <property type="entry name" value="Lipase_GDSL"/>
    <property type="match status" value="1"/>
</dbReference>
<dbReference type="SUPFAM" id="SSF52266">
    <property type="entry name" value="SGNH hydrolase"/>
    <property type="match status" value="1"/>
</dbReference>
<keyword id="KW-0325">Glycoprotein</keyword>
<keyword id="KW-0378">Hydrolase</keyword>
<keyword id="KW-0442">Lipid degradation</keyword>
<keyword id="KW-0443">Lipid metabolism</keyword>
<keyword id="KW-1185">Reference proteome</keyword>
<keyword id="KW-0677">Repeat</keyword>
<keyword id="KW-0964">Secreted</keyword>
<keyword id="KW-0732">Signal</keyword>
<comment type="subcellular location">
    <subcellularLocation>
        <location evidence="4">Secreted</location>
    </subcellularLocation>
</comment>
<comment type="tissue specificity">
    <text evidence="3">Specifically expressed in anthers (stages 8-12).</text>
</comment>
<comment type="similarity">
    <text evidence="4">Belongs to the 'GDSL' lipolytic enzyme family.</text>
</comment>
<evidence type="ECO:0000250" key="1"/>
<evidence type="ECO:0000255" key="2"/>
<evidence type="ECO:0000269" key="3">
    <source>
    </source>
</evidence>
<evidence type="ECO:0000305" key="4"/>
<organism>
    <name type="scientific">Arabidopsis thaliana</name>
    <name type="common">Mouse-ear cress</name>
    <dbReference type="NCBI Taxonomy" id="3702"/>
    <lineage>
        <taxon>Eukaryota</taxon>
        <taxon>Viridiplantae</taxon>
        <taxon>Streptophyta</taxon>
        <taxon>Embryophyta</taxon>
        <taxon>Tracheophyta</taxon>
        <taxon>Spermatophyta</taxon>
        <taxon>Magnoliopsida</taxon>
        <taxon>eudicotyledons</taxon>
        <taxon>Gunneridae</taxon>
        <taxon>Pentapetalae</taxon>
        <taxon>rosids</taxon>
        <taxon>malvids</taxon>
        <taxon>Brassicales</taxon>
        <taxon>Brassicaceae</taxon>
        <taxon>Camelineae</taxon>
        <taxon>Arabidopsis</taxon>
    </lineage>
</organism>
<sequence length="256" mass="28584">MVGPARPQIVLFGSSIVQMSFGHGGWGAILSEVYARKADIILRGYYGWNSSRALEVVDQVFPKDAAVQPSLVIVYFGGNDSMAPHSSGLGPHVPLTEYVDNMKKIALHLQSLSDFTRIIFLSSPPVDEAKVRQNQSPYLSEVIRTNDLCKTYSDACVELCQELGLEVVDLFSTFQKADDWKTVCFTDGIHLSAQGSKIVAGEILRVVKEAEWHPSLHWKSMPTEFADDSPYDLVSADGKQTVNSSEWTYFWEEQWD</sequence>
<name>CPR49_ARATH</name>
<accession>Q9SRM5</accession>
<accession>Q8LDB1</accession>